<dbReference type="EC" id="2.1.1.-"/>
<dbReference type="EMBL" id="AE016958">
    <property type="protein sequence ID" value="AAS06628.1"/>
    <property type="molecule type" value="Genomic_DNA"/>
</dbReference>
<dbReference type="RefSeq" id="WP_003873604.1">
    <property type="nucleotide sequence ID" value="NZ_CP106873.1"/>
</dbReference>
<dbReference type="SMR" id="Q73SJ5"/>
<dbReference type="STRING" id="262316.MAP_4078"/>
<dbReference type="KEGG" id="mpa:MAP_4078"/>
<dbReference type="eggNOG" id="COG3315">
    <property type="taxonomic scope" value="Bacteria"/>
</dbReference>
<dbReference type="HOGENOM" id="CLU_056160_2_1_11"/>
<dbReference type="Proteomes" id="UP000000580">
    <property type="component" value="Chromosome"/>
</dbReference>
<dbReference type="GO" id="GO:0008168">
    <property type="term" value="F:methyltransferase activity"/>
    <property type="evidence" value="ECO:0007669"/>
    <property type="project" value="UniProtKB-KW"/>
</dbReference>
<dbReference type="GO" id="GO:0032259">
    <property type="term" value="P:methylation"/>
    <property type="evidence" value="ECO:0007669"/>
    <property type="project" value="UniProtKB-KW"/>
</dbReference>
<dbReference type="FunFam" id="3.40.50.150:FF:000152">
    <property type="entry name" value="S-adenosyl-L-methionine-dependent methyltransferase"/>
    <property type="match status" value="1"/>
</dbReference>
<dbReference type="Gene3D" id="3.40.50.150">
    <property type="entry name" value="Vaccinia Virus protein VP39"/>
    <property type="match status" value="1"/>
</dbReference>
<dbReference type="InterPro" id="IPR007213">
    <property type="entry name" value="Ppm1/Ppm2/Tcmp"/>
</dbReference>
<dbReference type="InterPro" id="IPR029063">
    <property type="entry name" value="SAM-dependent_MTases_sf"/>
</dbReference>
<dbReference type="InterPro" id="IPR011610">
    <property type="entry name" value="SAM_mthyl_Trfase_ML2640-like"/>
</dbReference>
<dbReference type="NCBIfam" id="TIGR00027">
    <property type="entry name" value="mthyl_TIGR00027"/>
    <property type="match status" value="1"/>
</dbReference>
<dbReference type="PANTHER" id="PTHR43619">
    <property type="entry name" value="S-ADENOSYL-L-METHIONINE-DEPENDENT METHYLTRANSFERASE YKTD-RELATED"/>
    <property type="match status" value="1"/>
</dbReference>
<dbReference type="PANTHER" id="PTHR43619:SF2">
    <property type="entry name" value="S-ADENOSYL-L-METHIONINE-DEPENDENT METHYLTRANSFERASES SUPERFAMILY PROTEIN"/>
    <property type="match status" value="1"/>
</dbReference>
<dbReference type="Pfam" id="PF04072">
    <property type="entry name" value="LCM"/>
    <property type="match status" value="1"/>
</dbReference>
<dbReference type="SUPFAM" id="SSF53335">
    <property type="entry name" value="S-adenosyl-L-methionine-dependent methyltransferases"/>
    <property type="match status" value="1"/>
</dbReference>
<name>Y4078_MYCPA</name>
<accession>Q73SJ5</accession>
<proteinExistence type="inferred from homology"/>
<organism>
    <name type="scientific">Mycolicibacterium paratuberculosis (strain ATCC BAA-968 / K-10)</name>
    <name type="common">Mycobacterium paratuberculosis</name>
    <dbReference type="NCBI Taxonomy" id="262316"/>
    <lineage>
        <taxon>Bacteria</taxon>
        <taxon>Bacillati</taxon>
        <taxon>Actinomycetota</taxon>
        <taxon>Actinomycetes</taxon>
        <taxon>Mycobacteriales</taxon>
        <taxon>Mycobacteriaceae</taxon>
        <taxon>Mycobacterium</taxon>
        <taxon>Mycobacterium avium complex (MAC)</taxon>
    </lineage>
</organism>
<keyword id="KW-0489">Methyltransferase</keyword>
<keyword id="KW-1185">Reference proteome</keyword>
<keyword id="KW-0949">S-adenosyl-L-methionine</keyword>
<keyword id="KW-0808">Transferase</keyword>
<gene>
    <name type="ordered locus">MAP_4078</name>
</gene>
<sequence length="320" mass="35749">MPRTDDDSWEITESVGATALGVAAARAAETESENPLISDPFARVFLDAAGDGMWNWFAAPNLPAQIAEAEPDLKPRMQGMVDYMAARTAFFDNFFLAATHAGVRQVVILAAGLDSRAWRLPFEDGTTVYELDQPRVLEFKATTLAEHGARPTCHLVSVPVDLRHDWPAALRQAGFDAHAPSAWSAEGLLPFLPAAAQQLLFERVQTLAAPGSRIAVEAPGPDFIDEAARERQRQTMQRVRDLMADLEPDRDIPDVQDLWYFEEREDVGDWLGRHGWDVTVTPAPELMARYDRRPPHDIEDAIPQTRFVAAQRTERTRPDR</sequence>
<comment type="function">
    <text evidence="1">Exhibits S-adenosyl-L-methionine-dependent methyltransferase activity.</text>
</comment>
<comment type="similarity">
    <text evidence="3">Belongs to the UPF0677 family.</text>
</comment>
<protein>
    <recommendedName>
        <fullName>Putative S-adenosyl-L-methionine-dependent methyltransferase MAP_4078</fullName>
        <ecNumber>2.1.1.-</ecNumber>
    </recommendedName>
</protein>
<feature type="chain" id="PRO_0000361185" description="Putative S-adenosyl-L-methionine-dependent methyltransferase MAP_4078">
    <location>
        <begin position="1"/>
        <end position="320"/>
    </location>
</feature>
<feature type="region of interest" description="Disordered" evidence="2">
    <location>
        <begin position="294"/>
        <end position="320"/>
    </location>
</feature>
<feature type="binding site" evidence="1">
    <location>
        <position position="132"/>
    </location>
    <ligand>
        <name>S-adenosyl-L-methionine</name>
        <dbReference type="ChEBI" id="CHEBI:59789"/>
    </ligand>
</feature>
<feature type="binding site" evidence="1">
    <location>
        <begin position="161"/>
        <end position="162"/>
    </location>
    <ligand>
        <name>S-adenosyl-L-methionine</name>
        <dbReference type="ChEBI" id="CHEBI:59789"/>
    </ligand>
</feature>
<reference key="1">
    <citation type="journal article" date="2005" name="Proc. Natl. Acad. Sci. U.S.A.">
        <title>The complete genome sequence of Mycobacterium avium subspecies paratuberculosis.</title>
        <authorList>
            <person name="Li L."/>
            <person name="Bannantine J.P."/>
            <person name="Zhang Q."/>
            <person name="Amonsin A."/>
            <person name="May B.J."/>
            <person name="Alt D."/>
            <person name="Banerji N."/>
            <person name="Kanjilal S."/>
            <person name="Kapur V."/>
        </authorList>
    </citation>
    <scope>NUCLEOTIDE SEQUENCE [LARGE SCALE GENOMIC DNA]</scope>
    <source>
        <strain>ATCC BAA-968 / K-10</strain>
    </source>
</reference>
<evidence type="ECO:0000250" key="1"/>
<evidence type="ECO:0000256" key="2">
    <source>
        <dbReference type="SAM" id="MobiDB-lite"/>
    </source>
</evidence>
<evidence type="ECO:0000305" key="3"/>